<organism>
    <name type="scientific">Aspergillus fumigatus (strain CBS 144.89 / FGSC A1163 / CEA10)</name>
    <name type="common">Neosartorya fumigata</name>
    <dbReference type="NCBI Taxonomy" id="451804"/>
    <lineage>
        <taxon>Eukaryota</taxon>
        <taxon>Fungi</taxon>
        <taxon>Dikarya</taxon>
        <taxon>Ascomycota</taxon>
        <taxon>Pezizomycotina</taxon>
        <taxon>Eurotiomycetes</taxon>
        <taxon>Eurotiomycetidae</taxon>
        <taxon>Eurotiales</taxon>
        <taxon>Aspergillaceae</taxon>
        <taxon>Aspergillus</taxon>
        <taxon>Aspergillus subgen. Fumigati</taxon>
    </lineage>
</organism>
<proteinExistence type="inferred from homology"/>
<comment type="function">
    <text evidence="1">Essential component of the SCF (SKP1-CUL1-F-box protein) E3 ubiquitin ligase complexes, which mediate the ubiquitination and subsequent proteasomal degradation of target proteins. Controls sulfur metabolite repression, probably by mediating the inactivation or degradation of the metR transcription factor (By similarity).</text>
</comment>
<comment type="pathway">
    <text>Protein modification; protein ubiquitination.</text>
</comment>
<comment type="subunit">
    <text evidence="1">Component of the SCF (SKP1-CUL1-F-box protein) E3 ubiquitin ligase complexes.</text>
</comment>
<comment type="similarity">
    <text evidence="2">Belongs to the SKP1 family.</text>
</comment>
<feature type="chain" id="PRO_0000397261" description="E3 ubiquitin ligase complex SCF subunit sconC">
    <location>
        <begin position="1"/>
        <end position="158"/>
    </location>
</feature>
<feature type="region of interest" description="Interaction with the F-box domain of F-box proteins" evidence="1">
    <location>
        <begin position="100"/>
        <end position="158"/>
    </location>
</feature>
<sequence>MTTVTLTSSDGVDITVDRDVAERSILIKNMLEDLGESDEAIPIPNVNEVVLKKVIEWCTHHKNDPPSTGDDDDSRRKTTDIDEWDQKFMQVDQEMLFEIILAANYLDIKALLDVGCKTVANMIKGKSPEEIRKTFNIQNDFTPEEEDQIRRENEWAEE</sequence>
<accession>B0Y3B5</accession>
<evidence type="ECO:0000250" key="1"/>
<evidence type="ECO:0000305" key="2"/>
<reference key="1">
    <citation type="journal article" date="2008" name="PLoS Genet.">
        <title>Genomic islands in the pathogenic filamentous fungus Aspergillus fumigatus.</title>
        <authorList>
            <person name="Fedorova N.D."/>
            <person name="Khaldi N."/>
            <person name="Joardar V.S."/>
            <person name="Maiti R."/>
            <person name="Amedeo P."/>
            <person name="Anderson M.J."/>
            <person name="Crabtree J."/>
            <person name="Silva J.C."/>
            <person name="Badger J.H."/>
            <person name="Albarraq A."/>
            <person name="Angiuoli S."/>
            <person name="Bussey H."/>
            <person name="Bowyer P."/>
            <person name="Cotty P.J."/>
            <person name="Dyer P.S."/>
            <person name="Egan A."/>
            <person name="Galens K."/>
            <person name="Fraser-Liggett C.M."/>
            <person name="Haas B.J."/>
            <person name="Inman J.M."/>
            <person name="Kent R."/>
            <person name="Lemieux S."/>
            <person name="Malavazi I."/>
            <person name="Orvis J."/>
            <person name="Roemer T."/>
            <person name="Ronning C.M."/>
            <person name="Sundaram J.P."/>
            <person name="Sutton G."/>
            <person name="Turner G."/>
            <person name="Venter J.C."/>
            <person name="White O.R."/>
            <person name="Whitty B.R."/>
            <person name="Youngman P."/>
            <person name="Wolfe K.H."/>
            <person name="Goldman G.H."/>
            <person name="Wortman J.R."/>
            <person name="Jiang B."/>
            <person name="Denning D.W."/>
            <person name="Nierman W.C."/>
        </authorList>
    </citation>
    <scope>NUCLEOTIDE SEQUENCE [LARGE SCALE GENOMIC DNA]</scope>
    <source>
        <strain>CBS 144.89 / FGSC A1163 / CEA10</strain>
    </source>
</reference>
<gene>
    <name type="primary">sconC</name>
    <name type="synonym">skpA</name>
    <name type="ORF">AFUB_053620</name>
</gene>
<protein>
    <recommendedName>
        <fullName>E3 ubiquitin ligase complex SCF subunit sconC</fullName>
    </recommendedName>
    <alternativeName>
        <fullName>Sulfur controller C</fullName>
    </alternativeName>
    <alternativeName>
        <fullName>Sulfur metabolite repression control protein C</fullName>
    </alternativeName>
</protein>
<keyword id="KW-0833">Ubl conjugation pathway</keyword>
<dbReference type="EMBL" id="DS499597">
    <property type="protein sequence ID" value="EDP51356.1"/>
    <property type="molecule type" value="Genomic_DNA"/>
</dbReference>
<dbReference type="SMR" id="B0Y3B5"/>
<dbReference type="EnsemblFungi" id="EDP51356">
    <property type="protein sequence ID" value="EDP51356"/>
    <property type="gene ID" value="AFUB_053620"/>
</dbReference>
<dbReference type="VEuPathDB" id="FungiDB:AFUB_053620"/>
<dbReference type="HOGENOM" id="CLU_059252_4_0_1"/>
<dbReference type="OrthoDB" id="13110at5052"/>
<dbReference type="PhylomeDB" id="B0Y3B5"/>
<dbReference type="UniPathway" id="UPA00143"/>
<dbReference type="Proteomes" id="UP000001699">
    <property type="component" value="Unassembled WGS sequence"/>
</dbReference>
<dbReference type="GO" id="GO:0031518">
    <property type="term" value="C:CBF3 complex"/>
    <property type="evidence" value="ECO:0007669"/>
    <property type="project" value="EnsemblFungi"/>
</dbReference>
<dbReference type="GO" id="GO:0000776">
    <property type="term" value="C:kinetochore"/>
    <property type="evidence" value="ECO:0007669"/>
    <property type="project" value="EnsemblFungi"/>
</dbReference>
<dbReference type="GO" id="GO:0043224">
    <property type="term" value="C:nuclear SCF ubiquitin ligase complex"/>
    <property type="evidence" value="ECO:0007669"/>
    <property type="project" value="EnsemblFungi"/>
</dbReference>
<dbReference type="GO" id="GO:0043291">
    <property type="term" value="C:RAVE complex"/>
    <property type="evidence" value="ECO:0007669"/>
    <property type="project" value="EnsemblFungi"/>
</dbReference>
<dbReference type="GO" id="GO:0017117">
    <property type="term" value="C:single-stranded DNA-dependent ATP-dependent DNA helicase complex"/>
    <property type="evidence" value="ECO:0007669"/>
    <property type="project" value="EnsemblFungi"/>
</dbReference>
<dbReference type="GO" id="GO:0003688">
    <property type="term" value="F:DNA replication origin binding"/>
    <property type="evidence" value="ECO:0007669"/>
    <property type="project" value="EnsemblFungi"/>
</dbReference>
<dbReference type="GO" id="GO:0061630">
    <property type="term" value="F:ubiquitin protein ligase activity"/>
    <property type="evidence" value="ECO:0007669"/>
    <property type="project" value="EnsemblFungi"/>
</dbReference>
<dbReference type="GO" id="GO:0010458">
    <property type="term" value="P:exit from mitosis"/>
    <property type="evidence" value="ECO:0007669"/>
    <property type="project" value="EnsemblFungi"/>
</dbReference>
<dbReference type="GO" id="GO:0000082">
    <property type="term" value="P:G1/S transition of mitotic cell cycle"/>
    <property type="evidence" value="ECO:0007669"/>
    <property type="project" value="EnsemblFungi"/>
</dbReference>
<dbReference type="GO" id="GO:0000086">
    <property type="term" value="P:G2/M transition of mitotic cell cycle"/>
    <property type="evidence" value="ECO:0007669"/>
    <property type="project" value="EnsemblFungi"/>
</dbReference>
<dbReference type="GO" id="GO:0051382">
    <property type="term" value="P:kinetochore assembly"/>
    <property type="evidence" value="ECO:0007669"/>
    <property type="project" value="EnsemblFungi"/>
</dbReference>
<dbReference type="GO" id="GO:0101026">
    <property type="term" value="P:mitotic nuclear membrane biogenesis"/>
    <property type="evidence" value="ECO:0007669"/>
    <property type="project" value="EnsemblFungi"/>
</dbReference>
<dbReference type="GO" id="GO:2000766">
    <property type="term" value="P:negative regulation of cytoplasmic translation"/>
    <property type="evidence" value="ECO:0007669"/>
    <property type="project" value="EnsemblFungi"/>
</dbReference>
<dbReference type="GO" id="GO:0045841">
    <property type="term" value="P:negative regulation of mitotic metaphase/anaphase transition"/>
    <property type="evidence" value="ECO:0007669"/>
    <property type="project" value="EnsemblFungi"/>
</dbReference>
<dbReference type="GO" id="GO:0010828">
    <property type="term" value="P:positive regulation of D-glucose transmembrane transport"/>
    <property type="evidence" value="ECO:0007669"/>
    <property type="project" value="EnsemblFungi"/>
</dbReference>
<dbReference type="GO" id="GO:0045116">
    <property type="term" value="P:protein neddylation"/>
    <property type="evidence" value="ECO:0007669"/>
    <property type="project" value="EnsemblFungi"/>
</dbReference>
<dbReference type="GO" id="GO:0016567">
    <property type="term" value="P:protein ubiquitination"/>
    <property type="evidence" value="ECO:0007669"/>
    <property type="project" value="UniProtKB-UniPathway"/>
</dbReference>
<dbReference type="GO" id="GO:0000018">
    <property type="term" value="P:regulation of DNA recombination"/>
    <property type="evidence" value="ECO:0007669"/>
    <property type="project" value="EnsemblFungi"/>
</dbReference>
<dbReference type="GO" id="GO:0007096">
    <property type="term" value="P:regulation of exit from mitosis"/>
    <property type="evidence" value="ECO:0007669"/>
    <property type="project" value="EnsemblFungi"/>
</dbReference>
<dbReference type="GO" id="GO:0043254">
    <property type="term" value="P:regulation of protein-containing complex assembly"/>
    <property type="evidence" value="ECO:0007669"/>
    <property type="project" value="EnsemblFungi"/>
</dbReference>
<dbReference type="GO" id="GO:0000712">
    <property type="term" value="P:resolution of meiotic recombination intermediates"/>
    <property type="evidence" value="ECO:0007669"/>
    <property type="project" value="EnsemblFungi"/>
</dbReference>
<dbReference type="GO" id="GO:0031146">
    <property type="term" value="P:SCF-dependent proteasomal ubiquitin-dependent protein catabolic process"/>
    <property type="evidence" value="ECO:0007669"/>
    <property type="project" value="EnsemblFungi"/>
</dbReference>
<dbReference type="GO" id="GO:0000921">
    <property type="term" value="P:septin ring assembly"/>
    <property type="evidence" value="ECO:0007669"/>
    <property type="project" value="EnsemblFungi"/>
</dbReference>
<dbReference type="GO" id="GO:0030466">
    <property type="term" value="P:silent mating-type cassette heterochromatin formation"/>
    <property type="evidence" value="ECO:0007669"/>
    <property type="project" value="EnsemblFungi"/>
</dbReference>
<dbReference type="GO" id="GO:0007035">
    <property type="term" value="P:vacuolar acidification"/>
    <property type="evidence" value="ECO:0007669"/>
    <property type="project" value="EnsemblFungi"/>
</dbReference>
<dbReference type="GO" id="GO:0070072">
    <property type="term" value="P:vacuolar proton-transporting V-type ATPase complex assembly"/>
    <property type="evidence" value="ECO:0007669"/>
    <property type="project" value="EnsemblFungi"/>
</dbReference>
<dbReference type="CDD" id="cd18322">
    <property type="entry name" value="BTB_POZ_SKP1"/>
    <property type="match status" value="1"/>
</dbReference>
<dbReference type="FunFam" id="3.30.710.10:FF:000026">
    <property type="entry name" value="E3 ubiquitin ligase complex SCF subunit"/>
    <property type="match status" value="1"/>
</dbReference>
<dbReference type="Gene3D" id="3.30.710.10">
    <property type="entry name" value="Potassium Channel Kv1.1, Chain A"/>
    <property type="match status" value="1"/>
</dbReference>
<dbReference type="InterPro" id="IPR016897">
    <property type="entry name" value="SKP1"/>
</dbReference>
<dbReference type="InterPro" id="IPR001232">
    <property type="entry name" value="SKP1-like"/>
</dbReference>
<dbReference type="InterPro" id="IPR036296">
    <property type="entry name" value="SKP1-like_dim_sf"/>
</dbReference>
<dbReference type="InterPro" id="IPR011333">
    <property type="entry name" value="SKP1/BTB/POZ_sf"/>
</dbReference>
<dbReference type="InterPro" id="IPR016072">
    <property type="entry name" value="Skp1_comp_dimer"/>
</dbReference>
<dbReference type="InterPro" id="IPR016073">
    <property type="entry name" value="Skp1_comp_POZ"/>
</dbReference>
<dbReference type="PANTHER" id="PTHR11165">
    <property type="entry name" value="SKP1"/>
    <property type="match status" value="1"/>
</dbReference>
<dbReference type="Pfam" id="PF01466">
    <property type="entry name" value="Skp1"/>
    <property type="match status" value="1"/>
</dbReference>
<dbReference type="Pfam" id="PF03931">
    <property type="entry name" value="Skp1_POZ"/>
    <property type="match status" value="1"/>
</dbReference>
<dbReference type="PIRSF" id="PIRSF028729">
    <property type="entry name" value="E3_ubiquit_lig_SCF_Skp"/>
    <property type="match status" value="1"/>
</dbReference>
<dbReference type="SMART" id="SM00512">
    <property type="entry name" value="Skp1"/>
    <property type="match status" value="1"/>
</dbReference>
<dbReference type="SUPFAM" id="SSF54695">
    <property type="entry name" value="POZ domain"/>
    <property type="match status" value="1"/>
</dbReference>
<dbReference type="SUPFAM" id="SSF81382">
    <property type="entry name" value="Skp1 dimerisation domain-like"/>
    <property type="match status" value="1"/>
</dbReference>
<name>SKP1_ASPFC</name>